<organism>
    <name type="scientific">Nostoc sp. (strain PCC 7120 / SAG 25.82 / UTEX 2576)</name>
    <dbReference type="NCBI Taxonomy" id="103690"/>
    <lineage>
        <taxon>Bacteria</taxon>
        <taxon>Bacillati</taxon>
        <taxon>Cyanobacteriota</taxon>
        <taxon>Cyanophyceae</taxon>
        <taxon>Nostocales</taxon>
        <taxon>Nostocaceae</taxon>
        <taxon>Nostoc</taxon>
    </lineage>
</organism>
<reference key="1">
    <citation type="journal article" date="2001" name="DNA Res.">
        <title>Complete genomic sequence of the filamentous nitrogen-fixing cyanobacterium Anabaena sp. strain PCC 7120.</title>
        <authorList>
            <person name="Kaneko T."/>
            <person name="Nakamura Y."/>
            <person name="Wolk C.P."/>
            <person name="Kuritz T."/>
            <person name="Sasamoto S."/>
            <person name="Watanabe A."/>
            <person name="Iriguchi M."/>
            <person name="Ishikawa A."/>
            <person name="Kawashima K."/>
            <person name="Kimura T."/>
            <person name="Kishida Y."/>
            <person name="Kohara M."/>
            <person name="Matsumoto M."/>
            <person name="Matsuno A."/>
            <person name="Muraki A."/>
            <person name="Nakazaki N."/>
            <person name="Shimpo S."/>
            <person name="Sugimoto M."/>
            <person name="Takazawa M."/>
            <person name="Yamada M."/>
            <person name="Yasuda M."/>
            <person name="Tabata S."/>
        </authorList>
    </citation>
    <scope>NUCLEOTIDE SEQUENCE [LARGE SCALE GENOMIC DNA]</scope>
    <source>
        <strain>PCC 7120 / SAG 25.82 / UTEX 2576</strain>
    </source>
</reference>
<comment type="similarity">
    <text evidence="1">Belongs to the LarC family.</text>
</comment>
<feature type="chain" id="PRO_0000146842" description="Putative nickel insertion protein">
    <location>
        <begin position="1"/>
        <end position="426"/>
    </location>
</feature>
<name>Y200_NOSS1</name>
<keyword id="KW-0533">Nickel</keyword>
<keyword id="KW-1185">Reference proteome</keyword>
<dbReference type="EMBL" id="BA000019">
    <property type="protein sequence ID" value="BAB77724.1"/>
    <property type="molecule type" value="Genomic_DNA"/>
</dbReference>
<dbReference type="PIR" id="AH1831">
    <property type="entry name" value="AH1831"/>
</dbReference>
<dbReference type="SMR" id="Q8Z098"/>
<dbReference type="STRING" id="103690.gene:10492207"/>
<dbReference type="KEGG" id="ana:all0200"/>
<dbReference type="eggNOG" id="COG1641">
    <property type="taxonomic scope" value="Bacteria"/>
</dbReference>
<dbReference type="OrthoDB" id="9765625at2"/>
<dbReference type="Proteomes" id="UP000002483">
    <property type="component" value="Chromosome"/>
</dbReference>
<dbReference type="GO" id="GO:0016829">
    <property type="term" value="F:lyase activity"/>
    <property type="evidence" value="ECO:0007669"/>
    <property type="project" value="UniProtKB-UniRule"/>
</dbReference>
<dbReference type="GO" id="GO:0016151">
    <property type="term" value="F:nickel cation binding"/>
    <property type="evidence" value="ECO:0007669"/>
    <property type="project" value="UniProtKB-UniRule"/>
</dbReference>
<dbReference type="Gene3D" id="3.10.20.300">
    <property type="entry name" value="mk0293 like domain"/>
    <property type="match status" value="1"/>
</dbReference>
<dbReference type="Gene3D" id="3.30.70.1380">
    <property type="entry name" value="Transcriptional regulatory protein pf0864 domain like"/>
    <property type="match status" value="1"/>
</dbReference>
<dbReference type="HAMAP" id="MF_01074">
    <property type="entry name" value="LarC"/>
    <property type="match status" value="1"/>
</dbReference>
<dbReference type="InterPro" id="IPR002822">
    <property type="entry name" value="Ni_insertion"/>
</dbReference>
<dbReference type="NCBIfam" id="TIGR00299">
    <property type="entry name" value="nickel pincer cofactor biosynthesis protein LarC"/>
    <property type="match status" value="1"/>
</dbReference>
<dbReference type="PANTHER" id="PTHR36566">
    <property type="entry name" value="NICKEL INSERTION PROTEIN-RELATED"/>
    <property type="match status" value="1"/>
</dbReference>
<dbReference type="PANTHER" id="PTHR36566:SF1">
    <property type="entry name" value="PYRIDINIUM-3,5-BISTHIOCARBOXYLIC ACID MONONUCLEOTIDE NICKEL INSERTION PROTEIN"/>
    <property type="match status" value="1"/>
</dbReference>
<dbReference type="Pfam" id="PF01969">
    <property type="entry name" value="Ni_insertion"/>
    <property type="match status" value="1"/>
</dbReference>
<sequence length="426" mass="46646">MNKIAYLQCPTGISGDMCLGTLVSLGVPVAYLTEKLNNLGIAEEYKLRAEKVQRNGQEATKVHVDLLDHHHHDHEHHHHGRHLPEIEQMILQAGLPPRAEAWSLAVFRQLAVAEGSVHGIAPEKVHFHEVGAVDAIVDIVGTCLGLDWLGIASDNAGFPLLYCSAFPTGGGTVRAAHGQMAVPVPAVLKLWEMRGCPVYSNGIDRELVTPTGAAIATTLVKEFGAPPPMTIKQVGLGAGTINLPIPNILRLWLGESANLQANITDSAANSPTLETISVLETQIDDLNPQAIGYVFEQLFAVGALDVFTQPIGMKKSRPGILLTVICHPETLNDCEAVLFCETTTLGIRRTTQQRAVLQREFKPIQTKYGTVRIKIAWHGQSPEKVITNVQPEYEDCAELARKHKIPWREIQQLALQGWYESIQNSK</sequence>
<proteinExistence type="inferred from homology"/>
<evidence type="ECO:0000255" key="1">
    <source>
        <dbReference type="HAMAP-Rule" id="MF_01074"/>
    </source>
</evidence>
<gene>
    <name type="ordered locus">all0200</name>
</gene>
<accession>Q8Z098</accession>
<protein>
    <recommendedName>
        <fullName evidence="1">Putative nickel insertion protein</fullName>
    </recommendedName>
</protein>